<keyword id="KW-0240">DNA-directed RNA polymerase</keyword>
<keyword id="KW-0548">Nucleotidyltransferase</keyword>
<keyword id="KW-1185">Reference proteome</keyword>
<keyword id="KW-0804">Transcription</keyword>
<keyword id="KW-0808">Transferase</keyword>
<comment type="function">
    <text evidence="1">DNA-dependent RNA polymerase catalyzes the transcription of DNA into RNA using the four ribonucleoside triphosphates as substrates.</text>
</comment>
<comment type="catalytic activity">
    <reaction evidence="1">
        <text>RNA(n) + a ribonucleoside 5'-triphosphate = RNA(n+1) + diphosphate</text>
        <dbReference type="Rhea" id="RHEA:21248"/>
        <dbReference type="Rhea" id="RHEA-COMP:14527"/>
        <dbReference type="Rhea" id="RHEA-COMP:17342"/>
        <dbReference type="ChEBI" id="CHEBI:33019"/>
        <dbReference type="ChEBI" id="CHEBI:61557"/>
        <dbReference type="ChEBI" id="CHEBI:140395"/>
        <dbReference type="EC" id="2.7.7.6"/>
    </reaction>
</comment>
<comment type="subunit">
    <text evidence="1">The RNAP catalytic core consists of 2 alpha, 1 beta, 1 beta' and 1 omega subunit. When a sigma factor is associated with the core the holoenzyme is formed, which can initiate transcription.</text>
</comment>
<comment type="similarity">
    <text evidence="1">Belongs to the RNA polymerase beta chain family.</text>
</comment>
<feature type="chain" id="PRO_0000300382" description="DNA-directed RNA polymerase subunit beta">
    <location>
        <begin position="1"/>
        <end position="1379"/>
    </location>
</feature>
<evidence type="ECO:0000255" key="1">
    <source>
        <dbReference type="HAMAP-Rule" id="MF_01321"/>
    </source>
</evidence>
<accession>Q2K9M4</accession>
<reference key="1">
    <citation type="journal article" date="2006" name="Proc. Natl. Acad. Sci. U.S.A.">
        <title>The partitioned Rhizobium etli genome: genetic and metabolic redundancy in seven interacting replicons.</title>
        <authorList>
            <person name="Gonzalez V."/>
            <person name="Santamaria R.I."/>
            <person name="Bustos P."/>
            <person name="Hernandez-Gonzalez I."/>
            <person name="Medrano-Soto A."/>
            <person name="Moreno-Hagelsieb G."/>
            <person name="Janga S.C."/>
            <person name="Ramirez M.A."/>
            <person name="Jimenez-Jacinto V."/>
            <person name="Collado-Vides J."/>
            <person name="Davila G."/>
        </authorList>
    </citation>
    <scope>NUCLEOTIDE SEQUENCE [LARGE SCALE GENOMIC DNA]</scope>
    <source>
        <strain>ATCC 51251 / DSM 11541 / JCM 21823 / NBRC 15573 / CFN 42</strain>
    </source>
</reference>
<name>RPOB_RHIEC</name>
<sequence length="1379" mass="153420">MAQTLSFNGRRRVRKFFGKIPEVAEMPNLIEVQKASYDQFLMVEEPKGGRPDEGLQAVFKSVFPITDFSGASMLEFVSYEFEPPKFDVDECRQRDLTYAAPLKVTLRLIVFDIDEDTGAKSIKDIKEQSVYMGDMPLMTNNGTFIVNGTERVIVSQMHRSPGVFFDHDKGKSHSSGKLLFAARVIPYRGSWLDIEFDAKDIVYARIDRRRKIPVTSLLMALGMDGEEILDTFYTKSLYKRDGEGWRIPFKPETLKGAKAITEMVDADTGEVVVEAGKKLTPRLLRQLSDKGLKALKAGDDDLYGNYLAEDIVNYSTGEIYLEAGDEIDEKTLAVILANGFDEIPVLGIDHINVGAYIRNTLSADKNENRQDALFDIYRVMRPGEPPTMESAEAMFNSLFFDAERYDLSAVGRVKMNMRLDLSVEDTVRTLRKDDILAVVKMLVELRDGKGEIDDIDNLGNRRVRSVGELMENQYRLGLLRMERAIKERMSSIEIDTVMPQDLINAKPAAAAVREFFGSSQLSQFMDQVNPLSEITHKRRLSALGPGGLTRERAGFEVRDVHPTHYGRICPIETPEGPNIGLINSLATFARVNKYGFIESPYRRIVDGKVTNDVLYLSAMEEAKYYVAQANAELNADGSFVDEFVVCRHAGEVMLAPRDSMNLMDVSPKQVVSVAAALIPFLENDDANRALMGSNMQRQAVPLLRAEAPFVGTGMEPVVARDSGAAIGARRGGVVDQVDATRIVIRATEDLEAGKSGVDIYRLQKFQRSNQNTCVNQRPLVTVGDVVNRGDILADGPSTDLGDLALGRNALVAFMPWNGYNYEDSILLSERIVADDVFTSIHIEEFEVMARDTKLGPEEITRDIPNVSEEALKNLDEAGIVYIGAEVQPGDILVGKITPKGESPMTPEEKLLRAIFGEKASDVRDTSMRMPPGTYGTIVEVRVFNRHGVEKDERAMAIEREEIERLAKDRDDEQAILDRNVYGRLIDMLRGQVSIAGPKGFKKGTELSNAVVSEYPRSQWWMFAVEDEKVQSELEALRGQYDESKSRLEQRFMDKVEKVQRGDEMPPGVMKMVKVFVAVKRKIQPGDKMAGRHGNKGVVSRIVPVEDMPFLEDGTHVDVVLNPLGVPSRMNVGQILETHLGWACAGMGRQIGELIEAYKANGNIEPLRKTIGDVVGAGPKAEQVHEFDDESVLRLADQWKRGVSIATPVFDGANEGDVNDMLRLAGLKDTGQSTLYDGRTGEQFDRQVTVGYIYMLKLNHLVDDKIHARSIGPYSLVTQQPLGGKAQFGGQRFGEMEVWALEAYGAAYTLQEMLTVKSDDVAGRTKVYEAIVRGDDTFEAGIPESFNVLVKEMRSLGLSVELENTKLDEAQATQLPDAAE</sequence>
<organism>
    <name type="scientific">Rhizobium etli (strain ATCC 51251 / DSM 11541 / JCM 21823 / NBRC 15573 / CFN 42)</name>
    <dbReference type="NCBI Taxonomy" id="347834"/>
    <lineage>
        <taxon>Bacteria</taxon>
        <taxon>Pseudomonadati</taxon>
        <taxon>Pseudomonadota</taxon>
        <taxon>Alphaproteobacteria</taxon>
        <taxon>Hyphomicrobiales</taxon>
        <taxon>Rhizobiaceae</taxon>
        <taxon>Rhizobium/Agrobacterium group</taxon>
        <taxon>Rhizobium</taxon>
    </lineage>
</organism>
<proteinExistence type="inferred from homology"/>
<protein>
    <recommendedName>
        <fullName evidence="1">DNA-directed RNA polymerase subunit beta</fullName>
        <shortName evidence="1">RNAP subunit beta</shortName>
        <ecNumber evidence="1">2.7.7.6</ecNumber>
    </recommendedName>
    <alternativeName>
        <fullName evidence="1">RNA polymerase subunit beta</fullName>
    </alternativeName>
    <alternativeName>
        <fullName evidence="1">Transcriptase subunit beta</fullName>
    </alternativeName>
</protein>
<dbReference type="EC" id="2.7.7.6" evidence="1"/>
<dbReference type="EMBL" id="CP000133">
    <property type="protein sequence ID" value="ABC90462.1"/>
    <property type="molecule type" value="Genomic_DNA"/>
</dbReference>
<dbReference type="RefSeq" id="WP_011424975.1">
    <property type="nucleotide sequence ID" value="NC_007761.1"/>
</dbReference>
<dbReference type="SMR" id="Q2K9M4"/>
<dbReference type="KEGG" id="ret:RHE_CH01667"/>
<dbReference type="eggNOG" id="COG0085">
    <property type="taxonomic scope" value="Bacteria"/>
</dbReference>
<dbReference type="HOGENOM" id="CLU_000524_4_0_5"/>
<dbReference type="OrthoDB" id="9803954at2"/>
<dbReference type="Proteomes" id="UP000001936">
    <property type="component" value="Chromosome"/>
</dbReference>
<dbReference type="GO" id="GO:0000428">
    <property type="term" value="C:DNA-directed RNA polymerase complex"/>
    <property type="evidence" value="ECO:0007669"/>
    <property type="project" value="UniProtKB-KW"/>
</dbReference>
<dbReference type="GO" id="GO:0003677">
    <property type="term" value="F:DNA binding"/>
    <property type="evidence" value="ECO:0007669"/>
    <property type="project" value="UniProtKB-UniRule"/>
</dbReference>
<dbReference type="GO" id="GO:0003899">
    <property type="term" value="F:DNA-directed RNA polymerase activity"/>
    <property type="evidence" value="ECO:0007669"/>
    <property type="project" value="UniProtKB-UniRule"/>
</dbReference>
<dbReference type="GO" id="GO:0032549">
    <property type="term" value="F:ribonucleoside binding"/>
    <property type="evidence" value="ECO:0007669"/>
    <property type="project" value="InterPro"/>
</dbReference>
<dbReference type="GO" id="GO:0006351">
    <property type="term" value="P:DNA-templated transcription"/>
    <property type="evidence" value="ECO:0007669"/>
    <property type="project" value="UniProtKB-UniRule"/>
</dbReference>
<dbReference type="CDD" id="cd00653">
    <property type="entry name" value="RNA_pol_B_RPB2"/>
    <property type="match status" value="1"/>
</dbReference>
<dbReference type="FunFam" id="2.40.50.100:FF:000006">
    <property type="entry name" value="DNA-directed RNA polymerase subunit beta"/>
    <property type="match status" value="1"/>
</dbReference>
<dbReference type="FunFam" id="3.90.1800.10:FF:000001">
    <property type="entry name" value="DNA-directed RNA polymerase subunit beta"/>
    <property type="match status" value="1"/>
</dbReference>
<dbReference type="Gene3D" id="2.40.50.100">
    <property type="match status" value="1"/>
</dbReference>
<dbReference type="Gene3D" id="2.40.50.150">
    <property type="match status" value="1"/>
</dbReference>
<dbReference type="Gene3D" id="3.90.1100.10">
    <property type="match status" value="2"/>
</dbReference>
<dbReference type="Gene3D" id="2.30.150.10">
    <property type="entry name" value="DNA-directed RNA polymerase, beta subunit, external 1 domain"/>
    <property type="match status" value="1"/>
</dbReference>
<dbReference type="Gene3D" id="2.40.270.10">
    <property type="entry name" value="DNA-directed RNA polymerase, subunit 2, domain 6"/>
    <property type="match status" value="1"/>
</dbReference>
<dbReference type="Gene3D" id="3.90.1800.10">
    <property type="entry name" value="RNA polymerase alpha subunit dimerisation domain"/>
    <property type="match status" value="1"/>
</dbReference>
<dbReference type="Gene3D" id="3.90.1110.10">
    <property type="entry name" value="RNA polymerase Rpb2, domain 2"/>
    <property type="match status" value="1"/>
</dbReference>
<dbReference type="HAMAP" id="MF_01321">
    <property type="entry name" value="RNApol_bact_RpoB"/>
    <property type="match status" value="1"/>
</dbReference>
<dbReference type="InterPro" id="IPR042107">
    <property type="entry name" value="DNA-dir_RNA_pol_bsu_ext_1_sf"/>
</dbReference>
<dbReference type="InterPro" id="IPR019462">
    <property type="entry name" value="DNA-dir_RNA_pol_bsu_external_1"/>
</dbReference>
<dbReference type="InterPro" id="IPR015712">
    <property type="entry name" value="DNA-dir_RNA_pol_su2"/>
</dbReference>
<dbReference type="InterPro" id="IPR007120">
    <property type="entry name" value="DNA-dir_RNAP_su2_dom"/>
</dbReference>
<dbReference type="InterPro" id="IPR037033">
    <property type="entry name" value="DNA-dir_RNAP_su2_hyb_sf"/>
</dbReference>
<dbReference type="InterPro" id="IPR010243">
    <property type="entry name" value="RNA_pol_bsu_bac"/>
</dbReference>
<dbReference type="InterPro" id="IPR007121">
    <property type="entry name" value="RNA_pol_bsu_CS"/>
</dbReference>
<dbReference type="InterPro" id="IPR007644">
    <property type="entry name" value="RNA_pol_bsu_protrusion"/>
</dbReference>
<dbReference type="InterPro" id="IPR007642">
    <property type="entry name" value="RNA_pol_Rpb2_2"/>
</dbReference>
<dbReference type="InterPro" id="IPR037034">
    <property type="entry name" value="RNA_pol_Rpb2_2_sf"/>
</dbReference>
<dbReference type="InterPro" id="IPR007645">
    <property type="entry name" value="RNA_pol_Rpb2_3"/>
</dbReference>
<dbReference type="InterPro" id="IPR007641">
    <property type="entry name" value="RNA_pol_Rpb2_7"/>
</dbReference>
<dbReference type="InterPro" id="IPR014724">
    <property type="entry name" value="RNA_pol_RPB2_OB-fold"/>
</dbReference>
<dbReference type="NCBIfam" id="NF001616">
    <property type="entry name" value="PRK00405.1"/>
    <property type="match status" value="1"/>
</dbReference>
<dbReference type="NCBIfam" id="TIGR02013">
    <property type="entry name" value="rpoB"/>
    <property type="match status" value="1"/>
</dbReference>
<dbReference type="PANTHER" id="PTHR20856">
    <property type="entry name" value="DNA-DIRECTED RNA POLYMERASE I SUBUNIT 2"/>
    <property type="match status" value="1"/>
</dbReference>
<dbReference type="Pfam" id="PF04563">
    <property type="entry name" value="RNA_pol_Rpb2_1"/>
    <property type="match status" value="1"/>
</dbReference>
<dbReference type="Pfam" id="PF04561">
    <property type="entry name" value="RNA_pol_Rpb2_2"/>
    <property type="match status" value="2"/>
</dbReference>
<dbReference type="Pfam" id="PF04565">
    <property type="entry name" value="RNA_pol_Rpb2_3"/>
    <property type="match status" value="1"/>
</dbReference>
<dbReference type="Pfam" id="PF10385">
    <property type="entry name" value="RNA_pol_Rpb2_45"/>
    <property type="match status" value="1"/>
</dbReference>
<dbReference type="Pfam" id="PF00562">
    <property type="entry name" value="RNA_pol_Rpb2_6"/>
    <property type="match status" value="1"/>
</dbReference>
<dbReference type="Pfam" id="PF04560">
    <property type="entry name" value="RNA_pol_Rpb2_7"/>
    <property type="match status" value="1"/>
</dbReference>
<dbReference type="SUPFAM" id="SSF64484">
    <property type="entry name" value="beta and beta-prime subunits of DNA dependent RNA-polymerase"/>
    <property type="match status" value="1"/>
</dbReference>
<dbReference type="PROSITE" id="PS01166">
    <property type="entry name" value="RNA_POL_BETA"/>
    <property type="match status" value="1"/>
</dbReference>
<gene>
    <name evidence="1" type="primary">rpoB</name>
    <name type="ordered locus">RHE_CH01667</name>
</gene>